<comment type="function">
    <text evidence="1">Scaffold protein that connects plasma membrane proteins with members of the ezrin/moesin/radixin family and thereby helps to link them to the actin cytoskeleton and to regulate their surface expression. Necessary for cAMP-mediated phosphorylation and inhibition of SLC9A3. May also act as scaffold protein in the nucleus (By similarity).</text>
</comment>
<comment type="subunit">
    <text evidence="1">Homodimer, and heterodimer with NHERF1. Binds PDZK1. Interacts with SRY. Binds ADRB2, SLC9A3, P2RY1, P2YR2, RDX and LPAR2 (By similarity). Interacts with MCC (By similarity). Found in a complex with EZR, PODXL and NHERF2 (By similarity). Interacts (via the PDZ domains) with PODXL (via the C-terminal PDZ-binding motif DTHL); interaction is detected in glomerular epithelium cells (By similarity). Interacts with SGK1 and KCNJ1/ROMK1 (By similarity). Interacts (via the PDZ domains) with SLC26A6 (By similarity).</text>
</comment>
<comment type="interaction">
    <interactant intactId="EBI-538451">
        <id>Q9JHL1</id>
    </interactant>
    <interactant intactId="EBI-1554855">
        <id>P05622</id>
        <label>Pdgfrb</label>
    </interactant>
    <organismsDiffer>false</organismsDiffer>
    <experiments>2</experiments>
</comment>
<comment type="interaction">
    <interactant intactId="EBI-538451">
        <id>Q9JHL1</id>
    </interactant>
    <interactant intactId="EBI-1186266">
        <id>O08586</id>
        <label>Pten</label>
    </interactant>
    <organismsDiffer>false</organismsDiffer>
    <experiments>3</experiments>
</comment>
<comment type="interaction">
    <interactant intactId="EBI-538451">
        <id>Q9JHL1</id>
    </interactant>
    <interactant intactId="EBI-696162">
        <id>P60484</id>
        <label>PTEN</label>
    </interactant>
    <organismsDiffer>true</organismsDiffer>
    <experiments>2</experiments>
</comment>
<comment type="subcellular location">
    <subcellularLocation>
        <location evidence="1">Endomembrane system</location>
        <topology evidence="1">Peripheral membrane protein</topology>
    </subcellularLocation>
    <subcellularLocation>
        <location evidence="1">Nucleus</location>
    </subcellularLocation>
    <subcellularLocation>
        <location evidence="1">Apical cell membrane</location>
    </subcellularLocation>
    <text evidence="1">Localizes with EZR and PODXL at the apical cell membrane of glomerular epithelium cells and the sides of the food processes. Nuclear, in a punctate pattern (By similarity).</text>
</comment>
<comment type="alternative products">
    <event type="alternative splicing"/>
    <isoform>
        <id>Q9JHL1-1</id>
        <name>1</name>
        <sequence type="displayed"/>
    </isoform>
    <isoform>
        <id>Q9JHL1-2</id>
        <name>2</name>
        <sequence type="described" ref="VSP_009379 VSP_009380"/>
    </isoform>
</comment>
<sequence length="337" mass="37403">MAAPESLRPRLCRLVRGEQGYGFHLHGEKGRRGQFIRRVEPGSPAEAAALRAGDRLVEVNGVNVEGETHHQVVQRIKAVEGQTQLLVVDKETDEELCRRQLTCTEEMAHRGLPPAHNPWEPKPDWACSGSLGSDTGQKDVNGPPRELRPRLCHLRRGPQGYGFNLHSDKSRPGQYIRSVDPGSPASHSGLRAQDRLIEVNGQNVEGLRHAEVVARIKAQEDEARLLVVDPETDEHFKRLRVVPTEEHVEGPLPSPVTNGTSPAQLNGGSVCSSRSDLPGSEKDNEDGSTWKRDPFQESGLHLSPTAAEAKEKARATRVNKRAPQMDWNRKREIFSNF</sequence>
<proteinExistence type="evidence at protein level"/>
<evidence type="ECO:0000250" key="1"/>
<evidence type="ECO:0000250" key="2">
    <source>
        <dbReference type="UniProtKB" id="Q15599"/>
    </source>
</evidence>
<evidence type="ECO:0000250" key="3">
    <source>
        <dbReference type="UniProtKB" id="Q920G2"/>
    </source>
</evidence>
<evidence type="ECO:0000255" key="4">
    <source>
        <dbReference type="PROSITE-ProRule" id="PRU00143"/>
    </source>
</evidence>
<evidence type="ECO:0000256" key="5">
    <source>
        <dbReference type="SAM" id="MobiDB-lite"/>
    </source>
</evidence>
<evidence type="ECO:0000303" key="6">
    <source>
    </source>
</evidence>
<evidence type="ECO:0000303" key="7">
    <source>
    </source>
</evidence>
<evidence type="ECO:0000305" key="8"/>
<evidence type="ECO:0007744" key="9">
    <source>
    </source>
</evidence>
<reference key="1">
    <citation type="submission" date="1999-04" db="EMBL/GenBank/DDBJ databases">
        <title>cDNA cloning, genomic structure and sequence analysis of the mouse mSlc9a3r2/E3karp/Sip-1/Tka-1/Octs2 gene.</title>
        <authorList>
            <person name="Sarker A.H."/>
            <person name="Akiyama K."/>
            <person name="Tsutsui K."/>
            <person name="Seki S."/>
        </authorList>
    </citation>
    <scope>NUCLEOTIDE SEQUENCE [GENOMIC DNA / MRNA] (ISOFORM 1)</scope>
    <source>
        <strain>BALB/cJ</strain>
        <tissue>Blood</tissue>
        <tissue>Embryo</tissue>
    </source>
</reference>
<reference key="2">
    <citation type="journal article" date="2005" name="Science">
        <title>The transcriptional landscape of the mammalian genome.</title>
        <authorList>
            <person name="Carninci P."/>
            <person name="Kasukawa T."/>
            <person name="Katayama S."/>
            <person name="Gough J."/>
            <person name="Frith M.C."/>
            <person name="Maeda N."/>
            <person name="Oyama R."/>
            <person name="Ravasi T."/>
            <person name="Lenhard B."/>
            <person name="Wells C."/>
            <person name="Kodzius R."/>
            <person name="Shimokawa K."/>
            <person name="Bajic V.B."/>
            <person name="Brenner S.E."/>
            <person name="Batalov S."/>
            <person name="Forrest A.R."/>
            <person name="Zavolan M."/>
            <person name="Davis M.J."/>
            <person name="Wilming L.G."/>
            <person name="Aidinis V."/>
            <person name="Allen J.E."/>
            <person name="Ambesi-Impiombato A."/>
            <person name="Apweiler R."/>
            <person name="Aturaliya R.N."/>
            <person name="Bailey T.L."/>
            <person name="Bansal M."/>
            <person name="Baxter L."/>
            <person name="Beisel K.W."/>
            <person name="Bersano T."/>
            <person name="Bono H."/>
            <person name="Chalk A.M."/>
            <person name="Chiu K.P."/>
            <person name="Choudhary V."/>
            <person name="Christoffels A."/>
            <person name="Clutterbuck D.R."/>
            <person name="Crowe M.L."/>
            <person name="Dalla E."/>
            <person name="Dalrymple B.P."/>
            <person name="de Bono B."/>
            <person name="Della Gatta G."/>
            <person name="di Bernardo D."/>
            <person name="Down T."/>
            <person name="Engstrom P."/>
            <person name="Fagiolini M."/>
            <person name="Faulkner G."/>
            <person name="Fletcher C.F."/>
            <person name="Fukushima T."/>
            <person name="Furuno M."/>
            <person name="Futaki S."/>
            <person name="Gariboldi M."/>
            <person name="Georgii-Hemming P."/>
            <person name="Gingeras T.R."/>
            <person name="Gojobori T."/>
            <person name="Green R.E."/>
            <person name="Gustincich S."/>
            <person name="Harbers M."/>
            <person name="Hayashi Y."/>
            <person name="Hensch T.K."/>
            <person name="Hirokawa N."/>
            <person name="Hill D."/>
            <person name="Huminiecki L."/>
            <person name="Iacono M."/>
            <person name="Ikeo K."/>
            <person name="Iwama A."/>
            <person name="Ishikawa T."/>
            <person name="Jakt M."/>
            <person name="Kanapin A."/>
            <person name="Katoh M."/>
            <person name="Kawasawa Y."/>
            <person name="Kelso J."/>
            <person name="Kitamura H."/>
            <person name="Kitano H."/>
            <person name="Kollias G."/>
            <person name="Krishnan S.P."/>
            <person name="Kruger A."/>
            <person name="Kummerfeld S.K."/>
            <person name="Kurochkin I.V."/>
            <person name="Lareau L.F."/>
            <person name="Lazarevic D."/>
            <person name="Lipovich L."/>
            <person name="Liu J."/>
            <person name="Liuni S."/>
            <person name="McWilliam S."/>
            <person name="Madan Babu M."/>
            <person name="Madera M."/>
            <person name="Marchionni L."/>
            <person name="Matsuda H."/>
            <person name="Matsuzawa S."/>
            <person name="Miki H."/>
            <person name="Mignone F."/>
            <person name="Miyake S."/>
            <person name="Morris K."/>
            <person name="Mottagui-Tabar S."/>
            <person name="Mulder N."/>
            <person name="Nakano N."/>
            <person name="Nakauchi H."/>
            <person name="Ng P."/>
            <person name="Nilsson R."/>
            <person name="Nishiguchi S."/>
            <person name="Nishikawa S."/>
            <person name="Nori F."/>
            <person name="Ohara O."/>
            <person name="Okazaki Y."/>
            <person name="Orlando V."/>
            <person name="Pang K.C."/>
            <person name="Pavan W.J."/>
            <person name="Pavesi G."/>
            <person name="Pesole G."/>
            <person name="Petrovsky N."/>
            <person name="Piazza S."/>
            <person name="Reed J."/>
            <person name="Reid J.F."/>
            <person name="Ring B.Z."/>
            <person name="Ringwald M."/>
            <person name="Rost B."/>
            <person name="Ruan Y."/>
            <person name="Salzberg S.L."/>
            <person name="Sandelin A."/>
            <person name="Schneider C."/>
            <person name="Schoenbach C."/>
            <person name="Sekiguchi K."/>
            <person name="Semple C.A."/>
            <person name="Seno S."/>
            <person name="Sessa L."/>
            <person name="Sheng Y."/>
            <person name="Shibata Y."/>
            <person name="Shimada H."/>
            <person name="Shimada K."/>
            <person name="Silva D."/>
            <person name="Sinclair B."/>
            <person name="Sperling S."/>
            <person name="Stupka E."/>
            <person name="Sugiura K."/>
            <person name="Sultana R."/>
            <person name="Takenaka Y."/>
            <person name="Taki K."/>
            <person name="Tammoja K."/>
            <person name="Tan S.L."/>
            <person name="Tang S."/>
            <person name="Taylor M.S."/>
            <person name="Tegner J."/>
            <person name="Teichmann S.A."/>
            <person name="Ueda H.R."/>
            <person name="van Nimwegen E."/>
            <person name="Verardo R."/>
            <person name="Wei C.L."/>
            <person name="Yagi K."/>
            <person name="Yamanishi H."/>
            <person name="Zabarovsky E."/>
            <person name="Zhu S."/>
            <person name="Zimmer A."/>
            <person name="Hide W."/>
            <person name="Bult C."/>
            <person name="Grimmond S.M."/>
            <person name="Teasdale R.D."/>
            <person name="Liu E.T."/>
            <person name="Brusic V."/>
            <person name="Quackenbush J."/>
            <person name="Wahlestedt C."/>
            <person name="Mattick J.S."/>
            <person name="Hume D.A."/>
            <person name="Kai C."/>
            <person name="Sasaki D."/>
            <person name="Tomaru Y."/>
            <person name="Fukuda S."/>
            <person name="Kanamori-Katayama M."/>
            <person name="Suzuki M."/>
            <person name="Aoki J."/>
            <person name="Arakawa T."/>
            <person name="Iida J."/>
            <person name="Imamura K."/>
            <person name="Itoh M."/>
            <person name="Kato T."/>
            <person name="Kawaji H."/>
            <person name="Kawagashira N."/>
            <person name="Kawashima T."/>
            <person name="Kojima M."/>
            <person name="Kondo S."/>
            <person name="Konno H."/>
            <person name="Nakano K."/>
            <person name="Ninomiya N."/>
            <person name="Nishio T."/>
            <person name="Okada M."/>
            <person name="Plessy C."/>
            <person name="Shibata K."/>
            <person name="Shiraki T."/>
            <person name="Suzuki S."/>
            <person name="Tagami M."/>
            <person name="Waki K."/>
            <person name="Watahiki A."/>
            <person name="Okamura-Oho Y."/>
            <person name="Suzuki H."/>
            <person name="Kawai J."/>
            <person name="Hayashizaki Y."/>
        </authorList>
    </citation>
    <scope>NUCLEOTIDE SEQUENCE [LARGE SCALE MRNA] (ISOFORMS 1 AND 2)</scope>
    <source>
        <strain>C57BL/6J</strain>
        <strain>NOD</strain>
        <tissue>Embryonic heart</tissue>
        <tissue>Kidney</tissue>
        <tissue>Small intestine</tissue>
        <tissue>Spinal cord</tissue>
    </source>
</reference>
<reference key="3">
    <citation type="journal article" date="2004" name="Genome Res.">
        <title>The status, quality, and expansion of the NIH full-length cDNA project: the Mammalian Gene Collection (MGC).</title>
        <authorList>
            <consortium name="The MGC Project Team"/>
        </authorList>
    </citation>
    <scope>NUCLEOTIDE SEQUENCE [LARGE SCALE MRNA] (ISOFORM 2)</scope>
    <source>
        <tissue>Mammary gland</tissue>
    </source>
</reference>
<reference key="4">
    <citation type="journal article" date="2003" name="Kidney Int.">
        <title>PDZK1: I. a major scaffolder in brush borders of proximal tubular cells.</title>
        <authorList>
            <person name="Gisler S.M."/>
            <person name="Pribanic S."/>
            <person name="Bacic D."/>
            <person name="Forrer P."/>
            <person name="Gantenbein A."/>
            <person name="Sabourin L.A."/>
            <person name="Tsuji A."/>
            <person name="Zhao Z.-S."/>
            <person name="Manser E."/>
            <person name="Biber J."/>
            <person name="Murer H."/>
        </authorList>
    </citation>
    <scope>INTERACTION WITH PDZK1</scope>
</reference>
<reference key="5">
    <citation type="journal article" date="2005" name="J. Biol. Chem.">
        <title>NHERF2/SIP-1 interacts with mouse SRY via a different mechanism than human SRY.</title>
        <authorList>
            <person name="Thevenet L."/>
            <person name="Albrecht K.H."/>
            <person name="Malki S."/>
            <person name="Berta P."/>
            <person name="Boizet-Bonhoure B."/>
            <person name="Poulat F."/>
        </authorList>
    </citation>
    <scope>INTERACTION WITH SRY</scope>
</reference>
<reference key="6">
    <citation type="journal article" date="2007" name="Proc. Natl. Acad. Sci. U.S.A.">
        <title>Large-scale phosphorylation analysis of mouse liver.</title>
        <authorList>
            <person name="Villen J."/>
            <person name="Beausoleil S.A."/>
            <person name="Gerber S.A."/>
            <person name="Gygi S.P."/>
        </authorList>
    </citation>
    <scope>IDENTIFICATION BY MASS SPECTROMETRY [LARGE SCALE ANALYSIS]</scope>
    <source>
        <tissue>Liver</tissue>
    </source>
</reference>
<reference key="7">
    <citation type="journal article" date="2010" name="Cell">
        <title>A tissue-specific atlas of mouse protein phosphorylation and expression.</title>
        <authorList>
            <person name="Huttlin E.L."/>
            <person name="Jedrychowski M.P."/>
            <person name="Elias J.E."/>
            <person name="Goswami T."/>
            <person name="Rad R."/>
            <person name="Beausoleil S.A."/>
            <person name="Villen J."/>
            <person name="Haas W."/>
            <person name="Sowa M.E."/>
            <person name="Gygi S.P."/>
        </authorList>
    </citation>
    <scope>PHOSPHORYLATION [LARGE SCALE ANALYSIS] AT SER-130; SER-269 AND SER-280</scope>
    <scope>IDENTIFICATION BY MASS SPECTROMETRY [LARGE SCALE ANALYSIS]</scope>
    <source>
        <tissue>Heart</tissue>
        <tissue>Kidney</tissue>
        <tissue>Lung</tissue>
        <tissue>Pancreas</tissue>
        <tissue>Spleen</tissue>
    </source>
</reference>
<dbReference type="EMBL" id="AB026489">
    <property type="protein sequence ID" value="BAA97568.1"/>
    <property type="molecule type" value="mRNA"/>
</dbReference>
<dbReference type="EMBL" id="AB026490">
    <property type="protein sequence ID" value="BAA97569.1"/>
    <property type="molecule type" value="Genomic_DNA"/>
</dbReference>
<dbReference type="EMBL" id="AK002557">
    <property type="protein sequence ID" value="BAB22185.1"/>
    <property type="molecule type" value="mRNA"/>
</dbReference>
<dbReference type="EMBL" id="AK039491">
    <property type="protein sequence ID" value="BAC30366.1"/>
    <property type="molecule type" value="mRNA"/>
</dbReference>
<dbReference type="EMBL" id="AK075813">
    <property type="protein sequence ID" value="BAC35980.1"/>
    <property type="molecule type" value="mRNA"/>
</dbReference>
<dbReference type="EMBL" id="AK084801">
    <property type="protein sequence ID" value="BAC39282.1"/>
    <property type="molecule type" value="mRNA"/>
</dbReference>
<dbReference type="EMBL" id="AK170057">
    <property type="protein sequence ID" value="BAE41537.1"/>
    <property type="molecule type" value="mRNA"/>
</dbReference>
<dbReference type="EMBL" id="BC065778">
    <property type="protein sequence ID" value="AAH65778.1"/>
    <property type="molecule type" value="mRNA"/>
</dbReference>
<dbReference type="CCDS" id="CCDS28488.1">
    <molecule id="Q9JHL1-1"/>
</dbReference>
<dbReference type="CCDS" id="CCDS28489.1">
    <molecule id="Q9JHL1-2"/>
</dbReference>
<dbReference type="RefSeq" id="NP_075542.2">
    <property type="nucleotide sequence ID" value="NM_023055.2"/>
</dbReference>
<dbReference type="RefSeq" id="NP_075938.2">
    <property type="nucleotide sequence ID" value="NM_023449.3"/>
</dbReference>
<dbReference type="SMR" id="Q9JHL1"/>
<dbReference type="BioGRID" id="211159">
    <property type="interactions" value="16"/>
</dbReference>
<dbReference type="FunCoup" id="Q9JHL1">
    <property type="interactions" value="190"/>
</dbReference>
<dbReference type="IntAct" id="Q9JHL1">
    <property type="interactions" value="6"/>
</dbReference>
<dbReference type="MINT" id="Q9JHL1"/>
<dbReference type="STRING" id="10090.ENSMUSP00000002572"/>
<dbReference type="GlyGen" id="Q9JHL1">
    <property type="glycosylation" value="1 site, 1 O-linked glycan (1 site)"/>
</dbReference>
<dbReference type="iPTMnet" id="Q9JHL1"/>
<dbReference type="PhosphoSitePlus" id="Q9JHL1"/>
<dbReference type="SwissPalm" id="Q9JHL1"/>
<dbReference type="jPOST" id="Q9JHL1"/>
<dbReference type="PaxDb" id="10090-ENSMUSP00000002572"/>
<dbReference type="PeptideAtlas" id="Q9JHL1"/>
<dbReference type="ProteomicsDB" id="293554">
    <molecule id="Q9JHL1-1"/>
</dbReference>
<dbReference type="ProteomicsDB" id="293555">
    <molecule id="Q9JHL1-2"/>
</dbReference>
<dbReference type="Pumba" id="Q9JHL1"/>
<dbReference type="DNASU" id="65962"/>
<dbReference type="GeneID" id="65962"/>
<dbReference type="KEGG" id="mmu:65962"/>
<dbReference type="UCSC" id="uc008axj.2">
    <molecule id="Q9JHL1-2"/>
    <property type="organism name" value="mouse"/>
</dbReference>
<dbReference type="UCSC" id="uc008axk.2">
    <molecule id="Q9JHL1-1"/>
    <property type="organism name" value="mouse"/>
</dbReference>
<dbReference type="AGR" id="MGI:1890662"/>
<dbReference type="CTD" id="9351"/>
<dbReference type="MGI" id="MGI:1890662">
    <property type="gene designation" value="Nherf2"/>
</dbReference>
<dbReference type="eggNOG" id="KOG3528">
    <property type="taxonomic scope" value="Eukaryota"/>
</dbReference>
<dbReference type="InParanoid" id="Q9JHL1"/>
<dbReference type="OrthoDB" id="10007415at2759"/>
<dbReference type="PhylomeDB" id="Q9JHL1"/>
<dbReference type="TreeFam" id="TF350449"/>
<dbReference type="BioGRID-ORCS" id="65962">
    <property type="hits" value="5 hits in 77 CRISPR screens"/>
</dbReference>
<dbReference type="PRO" id="PR:Q9JHL1"/>
<dbReference type="Proteomes" id="UP000000589">
    <property type="component" value="Unplaced"/>
</dbReference>
<dbReference type="RNAct" id="Q9JHL1">
    <property type="molecule type" value="protein"/>
</dbReference>
<dbReference type="GO" id="GO:0016324">
    <property type="term" value="C:apical plasma membrane"/>
    <property type="evidence" value="ECO:0000314"/>
    <property type="project" value="MGI"/>
</dbReference>
<dbReference type="GO" id="GO:0005737">
    <property type="term" value="C:cytoplasm"/>
    <property type="evidence" value="ECO:0000314"/>
    <property type="project" value="MGI"/>
</dbReference>
<dbReference type="GO" id="GO:0012505">
    <property type="term" value="C:endomembrane system"/>
    <property type="evidence" value="ECO:0007669"/>
    <property type="project" value="UniProtKB-SubCell"/>
</dbReference>
<dbReference type="GO" id="GO:0005634">
    <property type="term" value="C:nucleus"/>
    <property type="evidence" value="ECO:0000314"/>
    <property type="project" value="MGI"/>
</dbReference>
<dbReference type="GO" id="GO:0032420">
    <property type="term" value="C:stereocilium"/>
    <property type="evidence" value="ECO:0000314"/>
    <property type="project" value="MGI"/>
</dbReference>
<dbReference type="GO" id="GO:0032421">
    <property type="term" value="C:stereocilium bundle"/>
    <property type="evidence" value="ECO:0000314"/>
    <property type="project" value="MGI"/>
</dbReference>
<dbReference type="GO" id="GO:0060090">
    <property type="term" value="F:molecular adaptor activity"/>
    <property type="evidence" value="ECO:0007669"/>
    <property type="project" value="InterPro"/>
</dbReference>
<dbReference type="GO" id="GO:0019902">
    <property type="term" value="F:phosphatase binding"/>
    <property type="evidence" value="ECO:0000353"/>
    <property type="project" value="UniProtKB"/>
</dbReference>
<dbReference type="GO" id="GO:0051898">
    <property type="term" value="P:negative regulation of phosphatidylinositol 3-kinase/protein kinase B signal transduction"/>
    <property type="evidence" value="ECO:0000316"/>
    <property type="project" value="MGI"/>
</dbReference>
<dbReference type="GO" id="GO:0043491">
    <property type="term" value="P:phosphatidylinositol 3-kinase/protein kinase B signal transduction"/>
    <property type="evidence" value="ECO:0000316"/>
    <property type="project" value="MGI"/>
</dbReference>
<dbReference type="GO" id="GO:0007605">
    <property type="term" value="P:sensory perception of sound"/>
    <property type="evidence" value="ECO:0000315"/>
    <property type="project" value="MGI"/>
</dbReference>
<dbReference type="CDD" id="cd06768">
    <property type="entry name" value="PDZ_NHERF-like"/>
    <property type="match status" value="2"/>
</dbReference>
<dbReference type="FunFam" id="2.30.42.10:FF:000068">
    <property type="entry name" value="Na(+)/H(+) exchange regulatory cofactor NHE-RF"/>
    <property type="match status" value="2"/>
</dbReference>
<dbReference type="Gene3D" id="2.30.42.10">
    <property type="match status" value="2"/>
</dbReference>
<dbReference type="InterPro" id="IPR015098">
    <property type="entry name" value="EBP50_C"/>
</dbReference>
<dbReference type="InterPro" id="IPR051067">
    <property type="entry name" value="NHER"/>
</dbReference>
<dbReference type="InterPro" id="IPR017300">
    <property type="entry name" value="NHERF-1/NHERF-2"/>
</dbReference>
<dbReference type="InterPro" id="IPR001478">
    <property type="entry name" value="PDZ"/>
</dbReference>
<dbReference type="InterPro" id="IPR036034">
    <property type="entry name" value="PDZ_sf"/>
</dbReference>
<dbReference type="PANTHER" id="PTHR14191:SF4">
    <property type="entry name" value="NA(+)_H(+) EXCHANGE REGULATORY COFACTOR NHE-RF2"/>
    <property type="match status" value="1"/>
</dbReference>
<dbReference type="PANTHER" id="PTHR14191">
    <property type="entry name" value="PDZ DOMAIN CONTAINING PROTEIN"/>
    <property type="match status" value="1"/>
</dbReference>
<dbReference type="Pfam" id="PF09007">
    <property type="entry name" value="EBP50_C"/>
    <property type="match status" value="2"/>
</dbReference>
<dbReference type="Pfam" id="PF00595">
    <property type="entry name" value="PDZ"/>
    <property type="match status" value="2"/>
</dbReference>
<dbReference type="PIRSF" id="PIRSF037866">
    <property type="entry name" value="EBP50"/>
    <property type="match status" value="1"/>
</dbReference>
<dbReference type="SMART" id="SM00228">
    <property type="entry name" value="PDZ"/>
    <property type="match status" value="2"/>
</dbReference>
<dbReference type="SUPFAM" id="SSF50156">
    <property type="entry name" value="PDZ domain-like"/>
    <property type="match status" value="2"/>
</dbReference>
<dbReference type="PROSITE" id="PS50106">
    <property type="entry name" value="PDZ"/>
    <property type="match status" value="2"/>
</dbReference>
<feature type="chain" id="PRO_0000096806" description="Na(+)/H(+) exchange regulatory cofactor NHE-RF2">
    <location>
        <begin position="1"/>
        <end position="337"/>
    </location>
</feature>
<feature type="domain" description="PDZ 1" evidence="4">
    <location>
        <begin position="11"/>
        <end position="91"/>
    </location>
</feature>
<feature type="domain" description="PDZ 2" evidence="4">
    <location>
        <begin position="151"/>
        <end position="231"/>
    </location>
</feature>
<feature type="region of interest" description="Disordered" evidence="5">
    <location>
        <begin position="112"/>
        <end position="145"/>
    </location>
</feature>
<feature type="region of interest" description="Disordered" evidence="5">
    <location>
        <begin position="242"/>
        <end position="337"/>
    </location>
</feature>
<feature type="compositionally biased region" description="Polar residues" evidence="5">
    <location>
        <begin position="255"/>
        <end position="275"/>
    </location>
</feature>
<feature type="compositionally biased region" description="Basic and acidic residues" evidence="5">
    <location>
        <begin position="327"/>
        <end position="337"/>
    </location>
</feature>
<feature type="modified residue" description="Phosphoserine" evidence="9">
    <location>
        <position position="130"/>
    </location>
</feature>
<feature type="modified residue" description="Phosphoserine" evidence="2">
    <location>
        <position position="183"/>
    </location>
</feature>
<feature type="modified residue" description="Phosphoserine" evidence="3">
    <location>
        <position position="186"/>
    </location>
</feature>
<feature type="modified residue" description="Phosphoserine" evidence="2">
    <location>
        <position position="254"/>
    </location>
</feature>
<feature type="modified residue" description="Phosphoserine" evidence="9">
    <location>
        <position position="269"/>
    </location>
</feature>
<feature type="modified residue" description="Phosphoserine" evidence="9">
    <location>
        <position position="280"/>
    </location>
</feature>
<feature type="modified residue" description="Phosphoserine" evidence="2">
    <location>
        <position position="303"/>
    </location>
</feature>
<feature type="splice variant" id="VSP_009379" description="In isoform 2." evidence="6 7">
    <location>
        <begin position="1"/>
        <end position="111"/>
    </location>
</feature>
<feature type="splice variant" id="VSP_009380" description="In isoform 2." evidence="6 7">
    <original>LPPAHNPWEPKPDWACSGSLGSDTGQK</original>
    <variation>MARSRTSMLPASAPGAPPVNSQLGLTQ</variation>
    <location>
        <begin position="112"/>
        <end position="138"/>
    </location>
</feature>
<feature type="sequence conflict" description="In Ref. 2; BAC30366/BAC35980/BAC39282." evidence="8" ref="2">
    <original>P</original>
    <variation>L</variation>
    <location>
        <position position="4"/>
    </location>
</feature>
<feature type="sequence conflict" description="In Ref. 1; BAA97568/BAA97569 and 2; BAE41537." evidence="8" ref="1 2">
    <original>P</original>
    <variation>S</variation>
    <location>
        <position position="143"/>
    </location>
</feature>
<feature type="sequence conflict" description="In Ref. 2; BAC30366/BAC35980/BAC39282 and 3; AAH65778." evidence="8" ref="2 3">
    <original>V</original>
    <variation>I</variation>
    <location>
        <position position="242"/>
    </location>
</feature>
<feature type="sequence conflict" description="In Ref. 2; BAB22185." evidence="8" ref="2">
    <original>D</original>
    <variation>A</variation>
    <location>
        <position position="326"/>
    </location>
</feature>
<protein>
    <recommendedName>
        <fullName evidence="8">Na(+)/H(+) exchange regulatory cofactor NHE-RF2</fullName>
        <shortName>NHERF-2</shortName>
    </recommendedName>
    <alternativeName>
        <fullName>NHE3 kinase A regulatory protein E3KARP</fullName>
    </alternativeName>
    <alternativeName>
        <fullName>Octs2</fullName>
    </alternativeName>
    <alternativeName>
        <fullName>SRY-interacting protein 1</fullName>
        <shortName>SIP-1</shortName>
    </alternativeName>
    <alternativeName>
        <fullName>Sodium-hydrogen exchanger regulatory factor 2</fullName>
    </alternativeName>
    <alternativeName>
        <fullName>Solute carrier family 9 isoform A3 regulatory factor 2</fullName>
    </alternativeName>
    <alternativeName>
        <fullName>Tyrosine kinase activator protein 1</fullName>
        <shortName>TKA-1</shortName>
    </alternativeName>
</protein>
<keyword id="KW-0025">Alternative splicing</keyword>
<keyword id="KW-1003">Cell membrane</keyword>
<keyword id="KW-0472">Membrane</keyword>
<keyword id="KW-0539">Nucleus</keyword>
<keyword id="KW-0597">Phosphoprotein</keyword>
<keyword id="KW-1185">Reference proteome</keyword>
<keyword id="KW-0677">Repeat</keyword>
<accession>Q9JHL1</accession>
<accession>Q3TDR3</accession>
<accession>Q6P074</accession>
<accession>Q8BGL9</accession>
<accession>Q8BW05</accession>
<accession>Q9DCR6</accession>
<organism>
    <name type="scientific">Mus musculus</name>
    <name type="common">Mouse</name>
    <dbReference type="NCBI Taxonomy" id="10090"/>
    <lineage>
        <taxon>Eukaryota</taxon>
        <taxon>Metazoa</taxon>
        <taxon>Chordata</taxon>
        <taxon>Craniata</taxon>
        <taxon>Vertebrata</taxon>
        <taxon>Euteleostomi</taxon>
        <taxon>Mammalia</taxon>
        <taxon>Eutheria</taxon>
        <taxon>Euarchontoglires</taxon>
        <taxon>Glires</taxon>
        <taxon>Rodentia</taxon>
        <taxon>Myomorpha</taxon>
        <taxon>Muroidea</taxon>
        <taxon>Muridae</taxon>
        <taxon>Murinae</taxon>
        <taxon>Mus</taxon>
        <taxon>Mus</taxon>
    </lineage>
</organism>
<name>NHRF2_MOUSE</name>
<gene>
    <name type="primary">Nherf2</name>
    <name type="synonym">Slc9a3r2</name>
</gene>